<proteinExistence type="inferred from homology"/>
<accession>C3MJI5</accession>
<gene>
    <name evidence="1" type="primary">cbiT</name>
    <name type="ordered locus">LS215_0110</name>
</gene>
<reference key="1">
    <citation type="journal article" date="2009" name="Proc. Natl. Acad. Sci. U.S.A.">
        <title>Biogeography of the Sulfolobus islandicus pan-genome.</title>
        <authorList>
            <person name="Reno M.L."/>
            <person name="Held N.L."/>
            <person name="Fields C.J."/>
            <person name="Burke P.V."/>
            <person name="Whitaker R.J."/>
        </authorList>
    </citation>
    <scope>NUCLEOTIDE SEQUENCE [LARGE SCALE GENOMIC DNA]</scope>
    <source>
        <strain>L.S.2.15 / Lassen #1</strain>
    </source>
</reference>
<protein>
    <recommendedName>
        <fullName evidence="1">Probable cobalt-precorrin-6B C(15)-methyltransferase (decarboxylating)</fullName>
        <ecNumber evidence="1">2.1.1.196</ecNumber>
    </recommendedName>
</protein>
<name>CBIT_SACI2</name>
<dbReference type="EC" id="2.1.1.196" evidence="1"/>
<dbReference type="EMBL" id="CP001399">
    <property type="protein sequence ID" value="ACP34263.1"/>
    <property type="molecule type" value="Genomic_DNA"/>
</dbReference>
<dbReference type="RefSeq" id="WP_012710289.1">
    <property type="nucleotide sequence ID" value="NC_012589.1"/>
</dbReference>
<dbReference type="SMR" id="C3MJI5"/>
<dbReference type="GeneID" id="84060590"/>
<dbReference type="KEGG" id="sis:LS215_0110"/>
<dbReference type="HOGENOM" id="CLU_094143_0_0_2"/>
<dbReference type="OrthoDB" id="6027at2157"/>
<dbReference type="UniPathway" id="UPA00148">
    <property type="reaction ID" value="UER00229"/>
</dbReference>
<dbReference type="Proteomes" id="UP000001747">
    <property type="component" value="Chromosome"/>
</dbReference>
<dbReference type="GO" id="GO:0043776">
    <property type="term" value="F:cobalt-precorrin-6B C5-methyltransferase activity"/>
    <property type="evidence" value="ECO:0007669"/>
    <property type="project" value="RHEA"/>
</dbReference>
<dbReference type="GO" id="GO:0008276">
    <property type="term" value="F:protein methyltransferase activity"/>
    <property type="evidence" value="ECO:0007669"/>
    <property type="project" value="InterPro"/>
</dbReference>
<dbReference type="GO" id="GO:0019251">
    <property type="term" value="P:anaerobic cobalamin biosynthetic process"/>
    <property type="evidence" value="ECO:0007669"/>
    <property type="project" value="UniProtKB-UniRule"/>
</dbReference>
<dbReference type="GO" id="GO:0032259">
    <property type="term" value="P:methylation"/>
    <property type="evidence" value="ECO:0007669"/>
    <property type="project" value="UniProtKB-KW"/>
</dbReference>
<dbReference type="CDD" id="cd02440">
    <property type="entry name" value="AdoMet_MTases"/>
    <property type="match status" value="1"/>
</dbReference>
<dbReference type="Gene3D" id="3.40.50.150">
    <property type="entry name" value="Vaccinia Virus protein VP39"/>
    <property type="match status" value="1"/>
</dbReference>
<dbReference type="HAMAP" id="MF_00786">
    <property type="entry name" value="CbiT"/>
    <property type="match status" value="1"/>
</dbReference>
<dbReference type="InterPro" id="IPR023475">
    <property type="entry name" value="CbiT"/>
</dbReference>
<dbReference type="InterPro" id="IPR014008">
    <property type="entry name" value="Cbl_synth_MTase_CbiT"/>
</dbReference>
<dbReference type="InterPro" id="IPR050714">
    <property type="entry name" value="Cobalamin_biosynth_MTase"/>
</dbReference>
<dbReference type="InterPro" id="IPR025714">
    <property type="entry name" value="Methyltranfer_dom"/>
</dbReference>
<dbReference type="InterPro" id="IPR029063">
    <property type="entry name" value="SAM-dependent_MTases_sf"/>
</dbReference>
<dbReference type="NCBIfam" id="TIGR02469">
    <property type="entry name" value="CbiT"/>
    <property type="match status" value="1"/>
</dbReference>
<dbReference type="NCBIfam" id="NF001556">
    <property type="entry name" value="PRK00377.1"/>
    <property type="match status" value="1"/>
</dbReference>
<dbReference type="PANTHER" id="PTHR43182">
    <property type="entry name" value="COBALT-PRECORRIN-6B C(15)-METHYLTRANSFERASE (DECARBOXYLATING)"/>
    <property type="match status" value="1"/>
</dbReference>
<dbReference type="PANTHER" id="PTHR43182:SF1">
    <property type="entry name" value="COBALT-PRECORRIN-7 C(5)-METHYLTRANSFERASE"/>
    <property type="match status" value="1"/>
</dbReference>
<dbReference type="Pfam" id="PF13847">
    <property type="entry name" value="Methyltransf_31"/>
    <property type="match status" value="1"/>
</dbReference>
<dbReference type="SUPFAM" id="SSF53335">
    <property type="entry name" value="S-adenosyl-L-methionine-dependent methyltransferases"/>
    <property type="match status" value="1"/>
</dbReference>
<evidence type="ECO:0000255" key="1">
    <source>
        <dbReference type="HAMAP-Rule" id="MF_00786"/>
    </source>
</evidence>
<feature type="chain" id="PRO_1000212931" description="Probable cobalt-precorrin-6B C(15)-methyltransferase (decarboxylating)">
    <location>
        <begin position="1"/>
        <end position="199"/>
    </location>
</feature>
<feature type="binding site" evidence="1">
    <location>
        <position position="24"/>
    </location>
    <ligand>
        <name>S-adenosyl-L-methionine</name>
        <dbReference type="ChEBI" id="CHEBI:59789"/>
    </ligand>
</feature>
<feature type="binding site" evidence="1">
    <location>
        <begin position="48"/>
        <end position="52"/>
    </location>
    <ligand>
        <name>S-adenosyl-L-methionine</name>
        <dbReference type="ChEBI" id="CHEBI:59789"/>
    </ligand>
</feature>
<feature type="binding site" evidence="1">
    <location>
        <position position="72"/>
    </location>
    <ligand>
        <name>S-adenosyl-L-methionine</name>
        <dbReference type="ChEBI" id="CHEBI:59789"/>
    </ligand>
</feature>
<feature type="binding site" evidence="1">
    <location>
        <position position="101"/>
    </location>
    <ligand>
        <name>S-adenosyl-L-methionine</name>
        <dbReference type="ChEBI" id="CHEBI:59789"/>
    </ligand>
</feature>
<organism>
    <name type="scientific">Saccharolobus islandicus (strain L.S.2.15 / Lassen #1)</name>
    <name type="common">Sulfolobus islandicus</name>
    <dbReference type="NCBI Taxonomy" id="429572"/>
    <lineage>
        <taxon>Archaea</taxon>
        <taxon>Thermoproteota</taxon>
        <taxon>Thermoprotei</taxon>
        <taxon>Sulfolobales</taxon>
        <taxon>Sulfolobaceae</taxon>
        <taxon>Saccharolobus</taxon>
    </lineage>
</organism>
<sequence>MEWKYVIPGIPDNFFERDEEIPMTKEEIRALALSKLRIRKGDMILDIGCGTGSVTVEASLLVGSTGKVYGVDKEEKAINLTRRNAEKFGVLNNIVLIKGEAPEILFTINEKFDRIFIGGGSEKIKEIISASWEIIKKGGRVVIDAILLETVNNAISAMENIGFMNLEITEVIIAKGMKTKVGTAMMTRNPIFIISGEKQ</sequence>
<comment type="function">
    <text evidence="1">Catalyzes the methylation of C-15 in cobalt-precorrin-6B followed by the decarboxylation of C-12 to form cobalt-precorrin-7.</text>
</comment>
<comment type="catalytic activity">
    <reaction evidence="1">
        <text>Co-precorrin-6B + S-adenosyl-L-methionine = Co-precorrin-7 + S-adenosyl-L-homocysteine + CO2</text>
        <dbReference type="Rhea" id="RHEA:36067"/>
        <dbReference type="ChEBI" id="CHEBI:16526"/>
        <dbReference type="ChEBI" id="CHEBI:57856"/>
        <dbReference type="ChEBI" id="CHEBI:59789"/>
        <dbReference type="ChEBI" id="CHEBI:70791"/>
        <dbReference type="ChEBI" id="CHEBI:72780"/>
        <dbReference type="EC" id="2.1.1.196"/>
    </reaction>
</comment>
<comment type="pathway">
    <text evidence="1">Cofactor biosynthesis; adenosylcobalamin biosynthesis; cob(II)yrinate a,c-diamide from sirohydrochlorin (anaerobic route): step 8/10.</text>
</comment>
<comment type="similarity">
    <text evidence="1">Belongs to the methyltransferase superfamily. Archaeal-type CbiT family.</text>
</comment>
<keyword id="KW-0169">Cobalamin biosynthesis</keyword>
<keyword id="KW-0489">Methyltransferase</keyword>
<keyword id="KW-0949">S-adenosyl-L-methionine</keyword>
<keyword id="KW-0808">Transferase</keyword>